<sequence length="604" mass="70146">MPSIKLLVWCCLCVISPRLCHSEKLFHSRDRSDLQPSAIEQAELVKDMLSAQQFLAKYGWTQPVIWDPSSTNENEPLKDFSLMQEGVCNPRQEVAEPTKSPQFIDALKKFQKLNNLPVTGTLDDATINAMNKPRCGVPDNQMAKKETEKPTAAQSLENKTKDSENVTQQNPDPPKIRRKRFLDMLMYSNKYREEQEALQKSTGKVFTKKLLKWRMIGEGYSNQLSINEQRYVFRLAFRMWSEVMPLDFEEDNTSPLSQIDIKLGFGRGRHLGCSRAFDGSGQEFAHAWFLGDIHFDDDEHFTAPSSEHGISLLKVAAHEIGHVLGLSHIHRVGSIMQPNYIPQDSGFELDLSDRRAIQNLYGSCEGPFDTAFDWIYKEKNQYGELVVRYNTYFFRNSWYWMYENRSNRTRYGDPLAIANGWHGIPVQNIDAFVHVWTWTRDASYFFKGTQYWRYDSENDKAYAEDAQGKSYPRLISEGFPGIPSPINAAYFDRRRQYIYFFRDSQVFAFDINRNRVAPDFPKRILDFFPAVAANNHPKGNIDVAYYSYTYSSLFLFKGKEFWKVVSDKDRRQNPSLPYNGLFPRRAISQQWFDICNVHPSLLKI</sequence>
<keyword id="KW-0106">Calcium</keyword>
<keyword id="KW-0165">Cleavage on pair of basic residues</keyword>
<keyword id="KW-1015">Disulfide bond</keyword>
<keyword id="KW-0325">Glycoprotein</keyword>
<keyword id="KW-0378">Hydrolase</keyword>
<keyword id="KW-0479">Metal-binding</keyword>
<keyword id="KW-0482">Metalloprotease</keyword>
<keyword id="KW-0645">Protease</keyword>
<keyword id="KW-1185">Reference proteome</keyword>
<keyword id="KW-0677">Repeat</keyword>
<keyword id="KW-0964">Secreted</keyword>
<keyword id="KW-0732">Signal</keyword>
<keyword id="KW-0862">Zinc</keyword>
<keyword id="KW-0865">Zymogen</keyword>
<accession>O93470</accession>
<dbReference type="EC" id="3.4.24.-"/>
<dbReference type="EMBL" id="U82541">
    <property type="protein sequence ID" value="AAC21447.1"/>
    <property type="molecule type" value="mRNA"/>
</dbReference>
<dbReference type="RefSeq" id="NP_001079285.1">
    <property type="nucleotide sequence ID" value="NM_001085816.1"/>
</dbReference>
<dbReference type="SMR" id="O93470"/>
<dbReference type="MEROPS" id="M10.026"/>
<dbReference type="GlyCosmos" id="O93470">
    <property type="glycosylation" value="4 sites, No reported glycans"/>
</dbReference>
<dbReference type="GeneID" id="378572"/>
<dbReference type="KEGG" id="xla:378572"/>
<dbReference type="AGR" id="Xenbase:XB-GENE-960307"/>
<dbReference type="CTD" id="378572"/>
<dbReference type="Xenbase" id="XB-GENE-960307">
    <property type="gene designation" value="mmp21.L"/>
</dbReference>
<dbReference type="OrthoDB" id="406838at2759"/>
<dbReference type="Proteomes" id="UP000186698">
    <property type="component" value="Chromosome 7L"/>
</dbReference>
<dbReference type="Bgee" id="378572">
    <property type="expression patterns" value="Expressed in neurula embryo and 11 other cell types or tissues"/>
</dbReference>
<dbReference type="GO" id="GO:0031012">
    <property type="term" value="C:extracellular matrix"/>
    <property type="evidence" value="ECO:0007669"/>
    <property type="project" value="InterPro"/>
</dbReference>
<dbReference type="GO" id="GO:0005576">
    <property type="term" value="C:extracellular region"/>
    <property type="evidence" value="ECO:0007669"/>
    <property type="project" value="UniProtKB-SubCell"/>
</dbReference>
<dbReference type="GO" id="GO:0004222">
    <property type="term" value="F:metalloendopeptidase activity"/>
    <property type="evidence" value="ECO:0000318"/>
    <property type="project" value="GO_Central"/>
</dbReference>
<dbReference type="GO" id="GO:0008270">
    <property type="term" value="F:zinc ion binding"/>
    <property type="evidence" value="ECO:0007669"/>
    <property type="project" value="InterPro"/>
</dbReference>
<dbReference type="GO" id="GO:0030574">
    <property type="term" value="P:collagen catabolic process"/>
    <property type="evidence" value="ECO:0000318"/>
    <property type="project" value="GO_Central"/>
</dbReference>
<dbReference type="GO" id="GO:0061371">
    <property type="term" value="P:determination of heart left/right asymmetry"/>
    <property type="evidence" value="ECO:0000250"/>
    <property type="project" value="UniProtKB"/>
</dbReference>
<dbReference type="GO" id="GO:0007368">
    <property type="term" value="P:determination of left/right symmetry"/>
    <property type="evidence" value="ECO:0000250"/>
    <property type="project" value="UniProtKB"/>
</dbReference>
<dbReference type="GO" id="GO:0030198">
    <property type="term" value="P:extracellular matrix organization"/>
    <property type="evidence" value="ECO:0000318"/>
    <property type="project" value="GO_Central"/>
</dbReference>
<dbReference type="GO" id="GO:0006508">
    <property type="term" value="P:proteolysis"/>
    <property type="evidence" value="ECO:0007669"/>
    <property type="project" value="UniProtKB-KW"/>
</dbReference>
<dbReference type="CDD" id="cd04278">
    <property type="entry name" value="ZnMc_MMP"/>
    <property type="match status" value="1"/>
</dbReference>
<dbReference type="FunFam" id="2.110.10.10:FF:000012">
    <property type="entry name" value="Matrix metallopeptidase 21"/>
    <property type="match status" value="1"/>
</dbReference>
<dbReference type="FunFam" id="2.110.10.10:FF:000015">
    <property type="entry name" value="Matrix metallopeptidase 21"/>
    <property type="match status" value="1"/>
</dbReference>
<dbReference type="Gene3D" id="3.40.390.10">
    <property type="entry name" value="Collagenase (Catalytic Domain)"/>
    <property type="match status" value="1"/>
</dbReference>
<dbReference type="Gene3D" id="2.110.10.10">
    <property type="entry name" value="Hemopexin-like domain"/>
    <property type="match status" value="2"/>
</dbReference>
<dbReference type="InterPro" id="IPR036375">
    <property type="entry name" value="Hemopexin-like_dom_sf"/>
</dbReference>
<dbReference type="InterPro" id="IPR018487">
    <property type="entry name" value="Hemopexin-like_repeat"/>
</dbReference>
<dbReference type="InterPro" id="IPR033739">
    <property type="entry name" value="M10A_MMP"/>
</dbReference>
<dbReference type="InterPro" id="IPR024079">
    <property type="entry name" value="MetalloPept_cat_dom_sf"/>
</dbReference>
<dbReference type="InterPro" id="IPR001818">
    <property type="entry name" value="Pept_M10_metallopeptidase"/>
</dbReference>
<dbReference type="InterPro" id="IPR021190">
    <property type="entry name" value="Pept_M10A"/>
</dbReference>
<dbReference type="InterPro" id="IPR006026">
    <property type="entry name" value="Peptidase_Metallo"/>
</dbReference>
<dbReference type="InterPro" id="IPR002477">
    <property type="entry name" value="Peptidoglycan-bd-like"/>
</dbReference>
<dbReference type="InterPro" id="IPR036365">
    <property type="entry name" value="PGBD-like_sf"/>
</dbReference>
<dbReference type="PANTHER" id="PTHR10201">
    <property type="entry name" value="MATRIX METALLOPROTEINASE"/>
    <property type="match status" value="1"/>
</dbReference>
<dbReference type="PANTHER" id="PTHR10201:SF324">
    <property type="entry name" value="MATRIX METALLOPROTEINASE-21"/>
    <property type="match status" value="1"/>
</dbReference>
<dbReference type="Pfam" id="PF00045">
    <property type="entry name" value="Hemopexin"/>
    <property type="match status" value="2"/>
</dbReference>
<dbReference type="Pfam" id="PF00413">
    <property type="entry name" value="Peptidase_M10"/>
    <property type="match status" value="1"/>
</dbReference>
<dbReference type="Pfam" id="PF01471">
    <property type="entry name" value="PG_binding_1"/>
    <property type="match status" value="1"/>
</dbReference>
<dbReference type="PIRSF" id="PIRSF001191">
    <property type="entry name" value="Peptidase_M10A_matrix"/>
    <property type="match status" value="1"/>
</dbReference>
<dbReference type="PRINTS" id="PR00138">
    <property type="entry name" value="MATRIXIN"/>
</dbReference>
<dbReference type="SMART" id="SM00120">
    <property type="entry name" value="HX"/>
    <property type="match status" value="4"/>
</dbReference>
<dbReference type="SMART" id="SM00235">
    <property type="entry name" value="ZnMc"/>
    <property type="match status" value="1"/>
</dbReference>
<dbReference type="SUPFAM" id="SSF50923">
    <property type="entry name" value="Hemopexin-like domain"/>
    <property type="match status" value="1"/>
</dbReference>
<dbReference type="SUPFAM" id="SSF55486">
    <property type="entry name" value="Metalloproteases ('zincins'), catalytic domain"/>
    <property type="match status" value="1"/>
</dbReference>
<dbReference type="SUPFAM" id="SSF47090">
    <property type="entry name" value="PGBD-like"/>
    <property type="match status" value="1"/>
</dbReference>
<dbReference type="PROSITE" id="PS51642">
    <property type="entry name" value="HEMOPEXIN_2"/>
    <property type="match status" value="4"/>
</dbReference>
<dbReference type="PROSITE" id="PS00142">
    <property type="entry name" value="ZINC_PROTEASE"/>
    <property type="match status" value="1"/>
</dbReference>
<comment type="function">
    <text evidence="2">Plays a specialized role in the generation of left-right asymmetry during embryogenesis. May act as a negative regulator of the NOTCH-signaling pathway.</text>
</comment>
<comment type="cofactor">
    <cofactor evidence="1">
        <name>Zn(2+)</name>
        <dbReference type="ChEBI" id="CHEBI:29105"/>
    </cofactor>
    <text evidence="1">Binds 1 zinc ion per subunit.</text>
</comment>
<comment type="cofactor">
    <cofactor evidence="1">
        <name>Ca(2+)</name>
        <dbReference type="ChEBI" id="CHEBI:29108"/>
    </cofactor>
</comment>
<comment type="subcellular location">
    <subcellularLocation>
        <location evidence="7">Secreted</location>
    </subcellularLocation>
</comment>
<comment type="developmental stage">
    <text evidence="6">Transiently expressed during embryo development. Undetected in the blastula stage embryo, induced in gastrula embryo, expressed in neurula embryo, and then down-regulated in pretailbud embryo.</text>
</comment>
<comment type="domain">
    <text>The conserved cysteine present in the cysteine-switch motif binds the catalytic zinc ion, thus inhibiting the enzyme. The dissociation of the cysteine from the zinc ion upon the activation-peptide release activates the enzyme.</text>
</comment>
<comment type="PTM">
    <text evidence="1">The precursor is cleaved by a furin endopeptidase.</text>
</comment>
<comment type="similarity">
    <text evidence="7">Belongs to the peptidase M10A family.</text>
</comment>
<proteinExistence type="evidence at transcript level"/>
<organism>
    <name type="scientific">Xenopus laevis</name>
    <name type="common">African clawed frog</name>
    <dbReference type="NCBI Taxonomy" id="8355"/>
    <lineage>
        <taxon>Eukaryota</taxon>
        <taxon>Metazoa</taxon>
        <taxon>Chordata</taxon>
        <taxon>Craniata</taxon>
        <taxon>Vertebrata</taxon>
        <taxon>Euteleostomi</taxon>
        <taxon>Amphibia</taxon>
        <taxon>Batrachia</taxon>
        <taxon>Anura</taxon>
        <taxon>Pipoidea</taxon>
        <taxon>Pipidae</taxon>
        <taxon>Xenopodinae</taxon>
        <taxon>Xenopus</taxon>
        <taxon>Xenopus</taxon>
    </lineage>
</organism>
<name>MMP21_XENLA</name>
<reference key="1">
    <citation type="journal article" date="1997" name="J. Biol. Chem.">
        <title>A novel matrix metalloproteinase gene (XMMP) encoding vitronectin-like motifs is transiently expressed in Xenopus laevis early embryo development.</title>
        <authorList>
            <person name="Yang M."/>
            <person name="Murray M.T."/>
            <person name="Kurkinen M."/>
        </authorList>
    </citation>
    <scope>NUCLEOTIDE SEQUENCE [MRNA]</scope>
    <scope>DEVELOPMENTAL STAGE</scope>
</reference>
<evidence type="ECO:0000250" key="1"/>
<evidence type="ECO:0000250" key="2">
    <source>
        <dbReference type="UniProtKB" id="Q8N119"/>
    </source>
</evidence>
<evidence type="ECO:0000255" key="3"/>
<evidence type="ECO:0000255" key="4">
    <source>
        <dbReference type="PROSITE-ProRule" id="PRU10095"/>
    </source>
</evidence>
<evidence type="ECO:0000256" key="5">
    <source>
        <dbReference type="SAM" id="MobiDB-lite"/>
    </source>
</evidence>
<evidence type="ECO:0000269" key="6">
    <source>
    </source>
</evidence>
<evidence type="ECO:0000305" key="7"/>
<gene>
    <name type="primary">mmp21</name>
    <name type="synonym">mmp</name>
</gene>
<feature type="signal peptide" evidence="3">
    <location>
        <begin position="1"/>
        <end position="22"/>
    </location>
</feature>
<feature type="propeptide" id="PRO_0000028844" evidence="1">
    <location>
        <begin position="23"/>
        <end position="180"/>
    </location>
</feature>
<feature type="chain" id="PRO_0000028845" description="Matrix metalloproteinase-21">
    <location>
        <begin position="181"/>
        <end position="604"/>
    </location>
</feature>
<feature type="repeat" description="Hemopexin 1">
    <location>
        <begin position="365"/>
        <end position="424"/>
    </location>
</feature>
<feature type="repeat" description="Hemopexin 2">
    <location>
        <begin position="426"/>
        <end position="482"/>
    </location>
</feature>
<feature type="repeat" description="Hemopexin 3">
    <location>
        <begin position="483"/>
        <end position="531"/>
    </location>
</feature>
<feature type="repeat" description="Hemopexin 4">
    <location>
        <begin position="538"/>
        <end position="594"/>
    </location>
</feature>
<feature type="region of interest" description="Disordered" evidence="5">
    <location>
        <begin position="132"/>
        <end position="175"/>
    </location>
</feature>
<feature type="short sequence motif" description="Cysteine switch" evidence="1">
    <location>
        <begin position="133"/>
        <end position="140"/>
    </location>
</feature>
<feature type="active site" evidence="4">
    <location>
        <position position="319"/>
    </location>
</feature>
<feature type="binding site" description="in inhibited form" evidence="1">
    <location>
        <position position="135"/>
    </location>
    <ligand>
        <name>Zn(2+)</name>
        <dbReference type="ChEBI" id="CHEBI:29105"/>
        <note>catalytic</note>
    </ligand>
</feature>
<feature type="binding site" evidence="4">
    <location>
        <position position="318"/>
    </location>
    <ligand>
        <name>Zn(2+)</name>
        <dbReference type="ChEBI" id="CHEBI:29105"/>
        <note>catalytic</note>
    </ligand>
</feature>
<feature type="binding site" evidence="4">
    <location>
        <position position="322"/>
    </location>
    <ligand>
        <name>Zn(2+)</name>
        <dbReference type="ChEBI" id="CHEBI:29105"/>
        <note>catalytic</note>
    </ligand>
</feature>
<feature type="binding site" evidence="4">
    <location>
        <position position="328"/>
    </location>
    <ligand>
        <name>Zn(2+)</name>
        <dbReference type="ChEBI" id="CHEBI:29105"/>
        <note>catalytic</note>
    </ligand>
</feature>
<feature type="glycosylation site" description="N-linked (GlcNAc...) asparagine" evidence="3">
    <location>
        <position position="158"/>
    </location>
</feature>
<feature type="glycosylation site" description="N-linked (GlcNAc...) asparagine" evidence="3">
    <location>
        <position position="165"/>
    </location>
</feature>
<feature type="glycosylation site" description="N-linked (GlcNAc...) asparagine" evidence="3">
    <location>
        <position position="404"/>
    </location>
</feature>
<feature type="glycosylation site" description="N-linked (GlcNAc...) asparagine" evidence="3">
    <location>
        <position position="407"/>
    </location>
</feature>
<feature type="disulfide bond" evidence="1">
    <location>
        <begin position="364"/>
        <end position="595"/>
    </location>
</feature>
<protein>
    <recommendedName>
        <fullName>Matrix metalloproteinase-21</fullName>
        <shortName>MMP-21</shortName>
        <shortName>xMMP</shortName>
        <ecNumber>3.4.24.-</ecNumber>
    </recommendedName>
</protein>